<sequence length="239" mass="25641">MNKNIIIKSIAALTILTSVTGVGTTMVEGIQQTAKAENTVKQITNTNVAPYSGVTWMGAGTGFVVGNHTIITNKHVTYHMKVGDEIKAHPNGFYNNGGGLYKVTKIVDYPGKEDIAVVQVEEKSTQPKGRKFKDFTSKFNIASEAKENEPISVIGYPNPNGNKLQMYESTGKVLSVNGNIVSSDAIIQPGSSGSPILNSKHEAIGVIYAGNKPSGESTRGFAVYFSPEIKKFIADNLDK</sequence>
<comment type="subcellular location">
    <subcellularLocation>
        <location evidence="1">Secreted</location>
    </subcellularLocation>
</comment>
<comment type="similarity">
    <text evidence="2">Belongs to the peptidase S1B family.</text>
</comment>
<proteinExistence type="inferred from homology"/>
<name>SPLF_STAAM</name>
<dbReference type="EC" id="3.4.21.-"/>
<dbReference type="EMBL" id="BA000017">
    <property type="protein sequence ID" value="BAB57971.1"/>
    <property type="molecule type" value="Genomic_DNA"/>
</dbReference>
<dbReference type="RefSeq" id="WP_001038752.1">
    <property type="nucleotide sequence ID" value="NC_002758.2"/>
</dbReference>
<dbReference type="SMR" id="Q99T61"/>
<dbReference type="MEROPS" id="S01.526"/>
<dbReference type="KEGG" id="sav:SAV1809"/>
<dbReference type="HOGENOM" id="CLU_073589_2_0_9"/>
<dbReference type="PhylomeDB" id="Q99T61"/>
<dbReference type="Proteomes" id="UP000002481">
    <property type="component" value="Chromosome"/>
</dbReference>
<dbReference type="GO" id="GO:0005576">
    <property type="term" value="C:extracellular region"/>
    <property type="evidence" value="ECO:0007669"/>
    <property type="project" value="UniProtKB-SubCell"/>
</dbReference>
<dbReference type="GO" id="GO:0008236">
    <property type="term" value="F:serine-type peptidase activity"/>
    <property type="evidence" value="ECO:0007669"/>
    <property type="project" value="UniProtKB-KW"/>
</dbReference>
<dbReference type="GO" id="GO:0006508">
    <property type="term" value="P:proteolysis"/>
    <property type="evidence" value="ECO:0007669"/>
    <property type="project" value="UniProtKB-KW"/>
</dbReference>
<dbReference type="Gene3D" id="2.40.10.10">
    <property type="entry name" value="Trypsin-like serine proteases"/>
    <property type="match status" value="2"/>
</dbReference>
<dbReference type="InterPro" id="IPR009003">
    <property type="entry name" value="Peptidase_S1_PA"/>
</dbReference>
<dbReference type="InterPro" id="IPR043504">
    <property type="entry name" value="Peptidase_S1_PA_chymotrypsin"/>
</dbReference>
<dbReference type="InterPro" id="IPR008256">
    <property type="entry name" value="Peptidase_S1B"/>
</dbReference>
<dbReference type="InterPro" id="IPR028301">
    <property type="entry name" value="V8_his_AS"/>
</dbReference>
<dbReference type="PANTHER" id="PTHR43019:SF23">
    <property type="entry name" value="PROTEASE DO-LIKE 5, CHLOROPLASTIC"/>
    <property type="match status" value="1"/>
</dbReference>
<dbReference type="PANTHER" id="PTHR43019">
    <property type="entry name" value="SERINE ENDOPROTEASE DEGS"/>
    <property type="match status" value="1"/>
</dbReference>
<dbReference type="Pfam" id="PF13365">
    <property type="entry name" value="Trypsin_2"/>
    <property type="match status" value="1"/>
</dbReference>
<dbReference type="PRINTS" id="PR00839">
    <property type="entry name" value="V8PROTEASE"/>
</dbReference>
<dbReference type="SUPFAM" id="SSF50494">
    <property type="entry name" value="Trypsin-like serine proteases"/>
    <property type="match status" value="1"/>
</dbReference>
<dbReference type="PROSITE" id="PS00672">
    <property type="entry name" value="V8_HIS"/>
    <property type="match status" value="1"/>
</dbReference>
<gene>
    <name type="primary">splF</name>
    <name type="ordered locus">SAV1809</name>
</gene>
<organism>
    <name type="scientific">Staphylococcus aureus (strain Mu50 / ATCC 700699)</name>
    <dbReference type="NCBI Taxonomy" id="158878"/>
    <lineage>
        <taxon>Bacteria</taxon>
        <taxon>Bacillati</taxon>
        <taxon>Bacillota</taxon>
        <taxon>Bacilli</taxon>
        <taxon>Bacillales</taxon>
        <taxon>Staphylococcaceae</taxon>
        <taxon>Staphylococcus</taxon>
    </lineage>
</organism>
<reference key="1">
    <citation type="journal article" date="2001" name="Lancet">
        <title>Whole genome sequencing of meticillin-resistant Staphylococcus aureus.</title>
        <authorList>
            <person name="Kuroda M."/>
            <person name="Ohta T."/>
            <person name="Uchiyama I."/>
            <person name="Baba T."/>
            <person name="Yuzawa H."/>
            <person name="Kobayashi I."/>
            <person name="Cui L."/>
            <person name="Oguchi A."/>
            <person name="Aoki K."/>
            <person name="Nagai Y."/>
            <person name="Lian J.-Q."/>
            <person name="Ito T."/>
            <person name="Kanamori M."/>
            <person name="Matsumaru H."/>
            <person name="Maruyama A."/>
            <person name="Murakami H."/>
            <person name="Hosoyama A."/>
            <person name="Mizutani-Ui Y."/>
            <person name="Takahashi N.K."/>
            <person name="Sawano T."/>
            <person name="Inoue R."/>
            <person name="Kaito C."/>
            <person name="Sekimizu K."/>
            <person name="Hirakawa H."/>
            <person name="Kuhara S."/>
            <person name="Goto S."/>
            <person name="Yabuzaki J."/>
            <person name="Kanehisa M."/>
            <person name="Yamashita A."/>
            <person name="Oshima K."/>
            <person name="Furuya K."/>
            <person name="Yoshino C."/>
            <person name="Shiba T."/>
            <person name="Hattori M."/>
            <person name="Ogasawara N."/>
            <person name="Hayashi H."/>
            <person name="Hiramatsu K."/>
        </authorList>
    </citation>
    <scope>NUCLEOTIDE SEQUENCE [LARGE SCALE GENOMIC DNA]</scope>
    <source>
        <strain>Mu50 / ATCC 700699</strain>
    </source>
</reference>
<evidence type="ECO:0000250" key="1"/>
<evidence type="ECO:0000305" key="2"/>
<feature type="signal peptide" evidence="1">
    <location>
        <begin position="1"/>
        <end position="36"/>
    </location>
</feature>
<feature type="chain" id="PRO_0000359582" description="Serine protease SplF">
    <location>
        <begin position="37"/>
        <end position="239"/>
    </location>
</feature>
<feature type="active site" description="Charge relay system" evidence="1">
    <location>
        <position position="75"/>
    </location>
</feature>
<feature type="active site" description="Charge relay system" evidence="1">
    <location>
        <position position="114"/>
    </location>
</feature>
<feature type="active site" description="Charge relay system" evidence="1">
    <location>
        <position position="192"/>
    </location>
</feature>
<keyword id="KW-0378">Hydrolase</keyword>
<keyword id="KW-0645">Protease</keyword>
<keyword id="KW-0964">Secreted</keyword>
<keyword id="KW-0720">Serine protease</keyword>
<keyword id="KW-0732">Signal</keyword>
<accession>Q99T61</accession>
<protein>
    <recommendedName>
        <fullName>Serine protease SplF</fullName>
        <ecNumber>3.4.21.-</ecNumber>
    </recommendedName>
</protein>